<feature type="chain" id="PRO_0000345911" description="tRNA modification GTPase MnmE">
    <location>
        <begin position="1"/>
        <end position="457"/>
    </location>
</feature>
<feature type="domain" description="TrmE-type G">
    <location>
        <begin position="223"/>
        <end position="377"/>
    </location>
</feature>
<feature type="binding site" evidence="1">
    <location>
        <position position="25"/>
    </location>
    <ligand>
        <name>(6S)-5-formyl-5,6,7,8-tetrahydrofolate</name>
        <dbReference type="ChEBI" id="CHEBI:57457"/>
    </ligand>
</feature>
<feature type="binding site" evidence="1">
    <location>
        <position position="87"/>
    </location>
    <ligand>
        <name>(6S)-5-formyl-5,6,7,8-tetrahydrofolate</name>
        <dbReference type="ChEBI" id="CHEBI:57457"/>
    </ligand>
</feature>
<feature type="binding site" evidence="1">
    <location>
        <position position="126"/>
    </location>
    <ligand>
        <name>(6S)-5-formyl-5,6,7,8-tetrahydrofolate</name>
        <dbReference type="ChEBI" id="CHEBI:57457"/>
    </ligand>
</feature>
<feature type="binding site" evidence="1">
    <location>
        <begin position="233"/>
        <end position="238"/>
    </location>
    <ligand>
        <name>GTP</name>
        <dbReference type="ChEBI" id="CHEBI:37565"/>
    </ligand>
</feature>
<feature type="binding site" evidence="1">
    <location>
        <position position="233"/>
    </location>
    <ligand>
        <name>K(+)</name>
        <dbReference type="ChEBI" id="CHEBI:29103"/>
    </ligand>
</feature>
<feature type="binding site" evidence="1">
    <location>
        <position position="237"/>
    </location>
    <ligand>
        <name>Mg(2+)</name>
        <dbReference type="ChEBI" id="CHEBI:18420"/>
    </ligand>
</feature>
<feature type="binding site" evidence="1">
    <location>
        <begin position="252"/>
        <end position="258"/>
    </location>
    <ligand>
        <name>GTP</name>
        <dbReference type="ChEBI" id="CHEBI:37565"/>
    </ligand>
</feature>
<feature type="binding site" evidence="1">
    <location>
        <position position="252"/>
    </location>
    <ligand>
        <name>K(+)</name>
        <dbReference type="ChEBI" id="CHEBI:29103"/>
    </ligand>
</feature>
<feature type="binding site" evidence="1">
    <location>
        <position position="254"/>
    </location>
    <ligand>
        <name>K(+)</name>
        <dbReference type="ChEBI" id="CHEBI:29103"/>
    </ligand>
</feature>
<feature type="binding site" evidence="1">
    <location>
        <position position="257"/>
    </location>
    <ligand>
        <name>K(+)</name>
        <dbReference type="ChEBI" id="CHEBI:29103"/>
    </ligand>
</feature>
<feature type="binding site" evidence="1">
    <location>
        <position position="258"/>
    </location>
    <ligand>
        <name>Mg(2+)</name>
        <dbReference type="ChEBI" id="CHEBI:18420"/>
    </ligand>
</feature>
<feature type="binding site" evidence="1">
    <location>
        <begin position="277"/>
        <end position="280"/>
    </location>
    <ligand>
        <name>GTP</name>
        <dbReference type="ChEBI" id="CHEBI:37565"/>
    </ligand>
</feature>
<feature type="binding site" evidence="1">
    <location>
        <position position="457"/>
    </location>
    <ligand>
        <name>(6S)-5-formyl-5,6,7,8-tetrahydrofolate</name>
        <dbReference type="ChEBI" id="CHEBI:57457"/>
    </ligand>
</feature>
<comment type="function">
    <text evidence="1">Exhibits a very high intrinsic GTPase hydrolysis rate. Involved in the addition of a carboxymethylaminomethyl (cmnm) group at the wobble position (U34) of certain tRNAs, forming tRNA-cmnm(5)s(2)U34.</text>
</comment>
<comment type="cofactor">
    <cofactor evidence="1">
        <name>K(+)</name>
        <dbReference type="ChEBI" id="CHEBI:29103"/>
    </cofactor>
    <text evidence="1">Binds 1 potassium ion per subunit.</text>
</comment>
<comment type="subunit">
    <text evidence="1">Homodimer. Heterotetramer of two MnmE and two MnmG subunits.</text>
</comment>
<comment type="subcellular location">
    <subcellularLocation>
        <location evidence="1">Cytoplasm</location>
    </subcellularLocation>
</comment>
<comment type="similarity">
    <text evidence="1">Belongs to the TRAFAC class TrmE-Era-EngA-EngB-Septin-like GTPase superfamily. TrmE GTPase family.</text>
</comment>
<gene>
    <name evidence="1" type="primary">mnmE</name>
    <name evidence="1" type="synonym">trmE</name>
    <name type="ordered locus">SPH_1119</name>
</gene>
<keyword id="KW-0963">Cytoplasm</keyword>
<keyword id="KW-0342">GTP-binding</keyword>
<keyword id="KW-0378">Hydrolase</keyword>
<keyword id="KW-0460">Magnesium</keyword>
<keyword id="KW-0479">Metal-binding</keyword>
<keyword id="KW-0547">Nucleotide-binding</keyword>
<keyword id="KW-0630">Potassium</keyword>
<keyword id="KW-0819">tRNA processing</keyword>
<accession>B1IBH5</accession>
<proteinExistence type="inferred from homology"/>
<evidence type="ECO:0000255" key="1">
    <source>
        <dbReference type="HAMAP-Rule" id="MF_00379"/>
    </source>
</evidence>
<protein>
    <recommendedName>
        <fullName evidence="1">tRNA modification GTPase MnmE</fullName>
        <ecNumber evidence="1">3.6.-.-</ecNumber>
    </recommendedName>
</protein>
<dbReference type="EC" id="3.6.-.-" evidence="1"/>
<dbReference type="EMBL" id="CP000936">
    <property type="protein sequence ID" value="ACA37264.1"/>
    <property type="molecule type" value="Genomic_DNA"/>
</dbReference>
<dbReference type="RefSeq" id="WP_000632715.1">
    <property type="nucleotide sequence ID" value="NC_010380.1"/>
</dbReference>
<dbReference type="SMR" id="B1IBH5"/>
<dbReference type="KEGG" id="spv:SPH_1119"/>
<dbReference type="HOGENOM" id="CLU_019624_4_1_9"/>
<dbReference type="Proteomes" id="UP000002163">
    <property type="component" value="Chromosome"/>
</dbReference>
<dbReference type="GO" id="GO:0005829">
    <property type="term" value="C:cytosol"/>
    <property type="evidence" value="ECO:0007669"/>
    <property type="project" value="TreeGrafter"/>
</dbReference>
<dbReference type="GO" id="GO:0005525">
    <property type="term" value="F:GTP binding"/>
    <property type="evidence" value="ECO:0007669"/>
    <property type="project" value="UniProtKB-UniRule"/>
</dbReference>
<dbReference type="GO" id="GO:0003924">
    <property type="term" value="F:GTPase activity"/>
    <property type="evidence" value="ECO:0007669"/>
    <property type="project" value="UniProtKB-UniRule"/>
</dbReference>
<dbReference type="GO" id="GO:0046872">
    <property type="term" value="F:metal ion binding"/>
    <property type="evidence" value="ECO:0007669"/>
    <property type="project" value="UniProtKB-KW"/>
</dbReference>
<dbReference type="GO" id="GO:0030488">
    <property type="term" value="P:tRNA methylation"/>
    <property type="evidence" value="ECO:0007669"/>
    <property type="project" value="TreeGrafter"/>
</dbReference>
<dbReference type="GO" id="GO:0002098">
    <property type="term" value="P:tRNA wobble uridine modification"/>
    <property type="evidence" value="ECO:0007669"/>
    <property type="project" value="TreeGrafter"/>
</dbReference>
<dbReference type="CDD" id="cd04164">
    <property type="entry name" value="trmE"/>
    <property type="match status" value="1"/>
</dbReference>
<dbReference type="CDD" id="cd14858">
    <property type="entry name" value="TrmE_N"/>
    <property type="match status" value="1"/>
</dbReference>
<dbReference type="FunFam" id="3.30.1360.120:FF:000003">
    <property type="entry name" value="tRNA modification GTPase MnmE"/>
    <property type="match status" value="1"/>
</dbReference>
<dbReference type="FunFam" id="3.40.50.300:FF:000494">
    <property type="entry name" value="tRNA modification GTPase MnmE"/>
    <property type="match status" value="1"/>
</dbReference>
<dbReference type="Gene3D" id="3.40.50.300">
    <property type="entry name" value="P-loop containing nucleotide triphosphate hydrolases"/>
    <property type="match status" value="1"/>
</dbReference>
<dbReference type="Gene3D" id="3.30.1360.120">
    <property type="entry name" value="Probable tRNA modification gtpase trme, domain 1"/>
    <property type="match status" value="1"/>
</dbReference>
<dbReference type="Gene3D" id="1.20.120.430">
    <property type="entry name" value="tRNA modification GTPase MnmE domain 2"/>
    <property type="match status" value="1"/>
</dbReference>
<dbReference type="HAMAP" id="MF_00379">
    <property type="entry name" value="GTPase_MnmE"/>
    <property type="match status" value="1"/>
</dbReference>
<dbReference type="InterPro" id="IPR031168">
    <property type="entry name" value="G_TrmE"/>
</dbReference>
<dbReference type="InterPro" id="IPR006073">
    <property type="entry name" value="GTP-bd"/>
</dbReference>
<dbReference type="InterPro" id="IPR018948">
    <property type="entry name" value="GTP-bd_TrmE_N"/>
</dbReference>
<dbReference type="InterPro" id="IPR004520">
    <property type="entry name" value="GTPase_MnmE"/>
</dbReference>
<dbReference type="InterPro" id="IPR027368">
    <property type="entry name" value="MnmE_dom2"/>
</dbReference>
<dbReference type="InterPro" id="IPR025867">
    <property type="entry name" value="MnmE_helical"/>
</dbReference>
<dbReference type="InterPro" id="IPR027417">
    <property type="entry name" value="P-loop_NTPase"/>
</dbReference>
<dbReference type="InterPro" id="IPR005225">
    <property type="entry name" value="Small_GTP-bd"/>
</dbReference>
<dbReference type="InterPro" id="IPR027266">
    <property type="entry name" value="TrmE/GcvT_dom1"/>
</dbReference>
<dbReference type="NCBIfam" id="TIGR00450">
    <property type="entry name" value="mnmE_trmE_thdF"/>
    <property type="match status" value="1"/>
</dbReference>
<dbReference type="NCBIfam" id="NF003661">
    <property type="entry name" value="PRK05291.1-3"/>
    <property type="match status" value="1"/>
</dbReference>
<dbReference type="NCBIfam" id="TIGR00231">
    <property type="entry name" value="small_GTP"/>
    <property type="match status" value="1"/>
</dbReference>
<dbReference type="PANTHER" id="PTHR42714">
    <property type="entry name" value="TRNA MODIFICATION GTPASE GTPBP3"/>
    <property type="match status" value="1"/>
</dbReference>
<dbReference type="PANTHER" id="PTHR42714:SF2">
    <property type="entry name" value="TRNA MODIFICATION GTPASE GTPBP3, MITOCHONDRIAL"/>
    <property type="match status" value="1"/>
</dbReference>
<dbReference type="Pfam" id="PF01926">
    <property type="entry name" value="MMR_HSR1"/>
    <property type="match status" value="1"/>
</dbReference>
<dbReference type="Pfam" id="PF12631">
    <property type="entry name" value="MnmE_helical"/>
    <property type="match status" value="1"/>
</dbReference>
<dbReference type="Pfam" id="PF10396">
    <property type="entry name" value="TrmE_N"/>
    <property type="match status" value="1"/>
</dbReference>
<dbReference type="SUPFAM" id="SSF52540">
    <property type="entry name" value="P-loop containing nucleoside triphosphate hydrolases"/>
    <property type="match status" value="1"/>
</dbReference>
<dbReference type="SUPFAM" id="SSF116878">
    <property type="entry name" value="TrmE connector domain"/>
    <property type="match status" value="1"/>
</dbReference>
<dbReference type="PROSITE" id="PS51709">
    <property type="entry name" value="G_TRME"/>
    <property type="match status" value="1"/>
</dbReference>
<name>MNME_STRPI</name>
<sequence>MITREFDTIAAISTPLGEGAIGIVRLSGTDSFAIAQKIFKGKDLNKVASHTLNYGHIIDPLTGKVMDEVMVGAMKSPKTFTREDIIEINTHGGIAVTNEILQLAIREGARLAEPGEFTKRAFLNGRVDLTQAEAVMDIIRAKTDKAMNIAVKQLDGSLSDLINNIRQEILNTLAQVEVNIDYPEYDDVEEATTAVVREKTMEFEQLLTKLLRTARRGKILREGISTAIIGRPNVGKSSLLNNLLREDKAIVTDIAGTTRDVIEEYVNINGVPLKLIDTAGIRETDDIVEQIGVERSKKALKEADLVLLVLNASEPLTAQDRQLLEISQDTNRIILLNKTDLPETIETSKLPEDVIRISVLKNQNIDKIEERINNLFFENAGLVEQDATYLSNARHISLIEKAVESLQAVNQGLELGMPVDLLQVDLTRTWEILGEITGDAAPDELITQLFSQFCLGK</sequence>
<reference key="1">
    <citation type="journal article" date="2010" name="Genome Biol.">
        <title>Structure and dynamics of the pan-genome of Streptococcus pneumoniae and closely related species.</title>
        <authorList>
            <person name="Donati C."/>
            <person name="Hiller N.L."/>
            <person name="Tettelin H."/>
            <person name="Muzzi A."/>
            <person name="Croucher N.J."/>
            <person name="Angiuoli S.V."/>
            <person name="Oggioni M."/>
            <person name="Dunning Hotopp J.C."/>
            <person name="Hu F.Z."/>
            <person name="Riley D.R."/>
            <person name="Covacci A."/>
            <person name="Mitchell T.J."/>
            <person name="Bentley S.D."/>
            <person name="Kilian M."/>
            <person name="Ehrlich G.D."/>
            <person name="Rappuoli R."/>
            <person name="Moxon E.R."/>
            <person name="Masignani V."/>
        </authorList>
    </citation>
    <scope>NUCLEOTIDE SEQUENCE [LARGE SCALE GENOMIC DNA]</scope>
    <source>
        <strain>Hungary19A-6</strain>
    </source>
</reference>
<organism>
    <name type="scientific">Streptococcus pneumoniae (strain Hungary19A-6)</name>
    <dbReference type="NCBI Taxonomy" id="487214"/>
    <lineage>
        <taxon>Bacteria</taxon>
        <taxon>Bacillati</taxon>
        <taxon>Bacillota</taxon>
        <taxon>Bacilli</taxon>
        <taxon>Lactobacillales</taxon>
        <taxon>Streptococcaceae</taxon>
        <taxon>Streptococcus</taxon>
    </lineage>
</organism>